<organism>
    <name type="scientific">Neisseria gonorrhoeae (strain NCCP11945)</name>
    <dbReference type="NCBI Taxonomy" id="521006"/>
    <lineage>
        <taxon>Bacteria</taxon>
        <taxon>Pseudomonadati</taxon>
        <taxon>Pseudomonadota</taxon>
        <taxon>Betaproteobacteria</taxon>
        <taxon>Neisseriales</taxon>
        <taxon>Neisseriaceae</taxon>
        <taxon>Neisseria</taxon>
    </lineage>
</organism>
<keyword id="KW-0030">Aminoacyl-tRNA synthetase</keyword>
<keyword id="KW-0067">ATP-binding</keyword>
<keyword id="KW-0963">Cytoplasm</keyword>
<keyword id="KW-0436">Ligase</keyword>
<keyword id="KW-0460">Magnesium</keyword>
<keyword id="KW-0479">Metal-binding</keyword>
<keyword id="KW-0547">Nucleotide-binding</keyword>
<keyword id="KW-0648">Protein biosynthesis</keyword>
<sequence length="503" mass="57322">MSEQNHPQTEPQLDENQIIALRREKLNNIRQQRNAYPNDFKRDSFAADLQAQYGEIGKEELDPQAVPVKIAGRMMLKRQMGKASFATIQDVTGQIQLYLNNKGVSQEVLDGFNHWDLGDIVGAEGTLFKTNHGELTVRVSDIRLLSKSLRPLPDKHKGLSDQETKYRQRYVDLIANEESRNTFIKRSQIIQSVRNFMVGEHYLEVETPMMHPIPGGATAKPFVTHHNALDIPLYLRIAPELYLKRLVVGGLERVFEINRSFRNEGMSVRHNPEFTMIEFYEAFSDYERMMQMAEDIIRNASRTVNGTANITYNGKEVDLESPFERLTILEAIKKYNPHYTDEQLNDAEWLKKEIVKHGESLPPSPGIGSLQLALFEGCAEGKLWNPTFIVDYPVEVSPLARASDTKQGLTERFELFVVGRELANGYSELNDPEDQAERFKSQVAQKDAGDDEAMHYDADYIRAMEFGLPPTGGCGIGIDRLVMLLTDLQTIRDVILFPQMRPE</sequence>
<reference key="1">
    <citation type="journal article" date="2008" name="J. Bacteriol.">
        <title>Complete genome sequence of Neisseria gonorrhoeae NCCP11945.</title>
        <authorList>
            <person name="Chung G.T."/>
            <person name="Yoo J.S."/>
            <person name="Oh H.B."/>
            <person name="Lee Y.S."/>
            <person name="Cha S.H."/>
            <person name="Kim S.J."/>
            <person name="Yoo C.K."/>
        </authorList>
    </citation>
    <scope>NUCLEOTIDE SEQUENCE [LARGE SCALE GENOMIC DNA]</scope>
    <source>
        <strain>NCCP11945</strain>
    </source>
</reference>
<dbReference type="EC" id="6.1.1.6" evidence="1"/>
<dbReference type="EMBL" id="CP001050">
    <property type="protein sequence ID" value="ACF30362.1"/>
    <property type="molecule type" value="Genomic_DNA"/>
</dbReference>
<dbReference type="RefSeq" id="WP_012503835.1">
    <property type="nucleotide sequence ID" value="NC_011035.1"/>
</dbReference>
<dbReference type="SMR" id="B4RP57"/>
<dbReference type="KEGG" id="ngk:NGK_1717"/>
<dbReference type="HOGENOM" id="CLU_008255_6_0_4"/>
<dbReference type="Proteomes" id="UP000002564">
    <property type="component" value="Chromosome"/>
</dbReference>
<dbReference type="GO" id="GO:0005829">
    <property type="term" value="C:cytosol"/>
    <property type="evidence" value="ECO:0007669"/>
    <property type="project" value="TreeGrafter"/>
</dbReference>
<dbReference type="GO" id="GO:0005524">
    <property type="term" value="F:ATP binding"/>
    <property type="evidence" value="ECO:0007669"/>
    <property type="project" value="UniProtKB-UniRule"/>
</dbReference>
<dbReference type="GO" id="GO:0004824">
    <property type="term" value="F:lysine-tRNA ligase activity"/>
    <property type="evidence" value="ECO:0007669"/>
    <property type="project" value="UniProtKB-UniRule"/>
</dbReference>
<dbReference type="GO" id="GO:0000287">
    <property type="term" value="F:magnesium ion binding"/>
    <property type="evidence" value="ECO:0007669"/>
    <property type="project" value="UniProtKB-UniRule"/>
</dbReference>
<dbReference type="GO" id="GO:0000049">
    <property type="term" value="F:tRNA binding"/>
    <property type="evidence" value="ECO:0007669"/>
    <property type="project" value="TreeGrafter"/>
</dbReference>
<dbReference type="GO" id="GO:0006430">
    <property type="term" value="P:lysyl-tRNA aminoacylation"/>
    <property type="evidence" value="ECO:0007669"/>
    <property type="project" value="UniProtKB-UniRule"/>
</dbReference>
<dbReference type="CDD" id="cd00775">
    <property type="entry name" value="LysRS_core"/>
    <property type="match status" value="1"/>
</dbReference>
<dbReference type="CDD" id="cd04322">
    <property type="entry name" value="LysRS_N"/>
    <property type="match status" value="1"/>
</dbReference>
<dbReference type="FunFam" id="2.40.50.140:FF:000024">
    <property type="entry name" value="Lysine--tRNA ligase"/>
    <property type="match status" value="1"/>
</dbReference>
<dbReference type="FunFam" id="3.30.930.10:FF:000001">
    <property type="entry name" value="Lysine--tRNA ligase"/>
    <property type="match status" value="1"/>
</dbReference>
<dbReference type="Gene3D" id="3.30.930.10">
    <property type="entry name" value="Bira Bifunctional Protein, Domain 2"/>
    <property type="match status" value="1"/>
</dbReference>
<dbReference type="Gene3D" id="2.40.50.140">
    <property type="entry name" value="Nucleic acid-binding proteins"/>
    <property type="match status" value="1"/>
</dbReference>
<dbReference type="HAMAP" id="MF_00252">
    <property type="entry name" value="Lys_tRNA_synth_class2"/>
    <property type="match status" value="1"/>
</dbReference>
<dbReference type="InterPro" id="IPR004364">
    <property type="entry name" value="Aa-tRNA-synt_II"/>
</dbReference>
<dbReference type="InterPro" id="IPR006195">
    <property type="entry name" value="aa-tRNA-synth_II"/>
</dbReference>
<dbReference type="InterPro" id="IPR045864">
    <property type="entry name" value="aa-tRNA-synth_II/BPL/LPL"/>
</dbReference>
<dbReference type="InterPro" id="IPR002313">
    <property type="entry name" value="Lys-tRNA-ligase_II"/>
</dbReference>
<dbReference type="InterPro" id="IPR044136">
    <property type="entry name" value="Lys-tRNA-ligase_II_N"/>
</dbReference>
<dbReference type="InterPro" id="IPR018149">
    <property type="entry name" value="Lys-tRNA-synth_II_C"/>
</dbReference>
<dbReference type="InterPro" id="IPR012340">
    <property type="entry name" value="NA-bd_OB-fold"/>
</dbReference>
<dbReference type="InterPro" id="IPR004365">
    <property type="entry name" value="NA-bd_OB_tRNA"/>
</dbReference>
<dbReference type="NCBIfam" id="TIGR00499">
    <property type="entry name" value="lysS_bact"/>
    <property type="match status" value="1"/>
</dbReference>
<dbReference type="NCBIfam" id="NF001756">
    <property type="entry name" value="PRK00484.1"/>
    <property type="match status" value="1"/>
</dbReference>
<dbReference type="PANTHER" id="PTHR42918:SF15">
    <property type="entry name" value="LYSINE--TRNA LIGASE, CHLOROPLASTIC_MITOCHONDRIAL"/>
    <property type="match status" value="1"/>
</dbReference>
<dbReference type="PANTHER" id="PTHR42918">
    <property type="entry name" value="LYSYL-TRNA SYNTHETASE"/>
    <property type="match status" value="1"/>
</dbReference>
<dbReference type="Pfam" id="PF00152">
    <property type="entry name" value="tRNA-synt_2"/>
    <property type="match status" value="1"/>
</dbReference>
<dbReference type="Pfam" id="PF01336">
    <property type="entry name" value="tRNA_anti-codon"/>
    <property type="match status" value="1"/>
</dbReference>
<dbReference type="PRINTS" id="PR00982">
    <property type="entry name" value="TRNASYNTHLYS"/>
</dbReference>
<dbReference type="SUPFAM" id="SSF55681">
    <property type="entry name" value="Class II aaRS and biotin synthetases"/>
    <property type="match status" value="1"/>
</dbReference>
<dbReference type="SUPFAM" id="SSF50249">
    <property type="entry name" value="Nucleic acid-binding proteins"/>
    <property type="match status" value="1"/>
</dbReference>
<dbReference type="PROSITE" id="PS50862">
    <property type="entry name" value="AA_TRNA_LIGASE_II"/>
    <property type="match status" value="1"/>
</dbReference>
<protein>
    <recommendedName>
        <fullName evidence="1">Lysine--tRNA ligase</fullName>
        <ecNumber evidence="1">6.1.1.6</ecNumber>
    </recommendedName>
    <alternativeName>
        <fullName evidence="1">Lysyl-tRNA synthetase</fullName>
        <shortName evidence="1">LysRS</shortName>
    </alternativeName>
</protein>
<evidence type="ECO:0000255" key="1">
    <source>
        <dbReference type="HAMAP-Rule" id="MF_00252"/>
    </source>
</evidence>
<name>SYK_NEIG2</name>
<proteinExistence type="inferred from homology"/>
<gene>
    <name evidence="1" type="primary">lysS</name>
    <name type="ordered locus">NGK_1717</name>
</gene>
<comment type="catalytic activity">
    <reaction evidence="1">
        <text>tRNA(Lys) + L-lysine + ATP = L-lysyl-tRNA(Lys) + AMP + diphosphate</text>
        <dbReference type="Rhea" id="RHEA:20792"/>
        <dbReference type="Rhea" id="RHEA-COMP:9696"/>
        <dbReference type="Rhea" id="RHEA-COMP:9697"/>
        <dbReference type="ChEBI" id="CHEBI:30616"/>
        <dbReference type="ChEBI" id="CHEBI:32551"/>
        <dbReference type="ChEBI" id="CHEBI:33019"/>
        <dbReference type="ChEBI" id="CHEBI:78442"/>
        <dbReference type="ChEBI" id="CHEBI:78529"/>
        <dbReference type="ChEBI" id="CHEBI:456215"/>
        <dbReference type="EC" id="6.1.1.6"/>
    </reaction>
</comment>
<comment type="cofactor">
    <cofactor evidence="1">
        <name>Mg(2+)</name>
        <dbReference type="ChEBI" id="CHEBI:18420"/>
    </cofactor>
    <text evidence="1">Binds 3 Mg(2+) ions per subunit.</text>
</comment>
<comment type="subunit">
    <text evidence="1">Homodimer.</text>
</comment>
<comment type="subcellular location">
    <subcellularLocation>
        <location evidence="1">Cytoplasm</location>
    </subcellularLocation>
</comment>
<comment type="similarity">
    <text evidence="1">Belongs to the class-II aminoacyl-tRNA synthetase family.</text>
</comment>
<accession>B4RP57</accession>
<feature type="chain" id="PRO_1000101129" description="Lysine--tRNA ligase">
    <location>
        <begin position="1"/>
        <end position="503"/>
    </location>
</feature>
<feature type="binding site" evidence="1">
    <location>
        <position position="414"/>
    </location>
    <ligand>
        <name>Mg(2+)</name>
        <dbReference type="ChEBI" id="CHEBI:18420"/>
        <label>1</label>
    </ligand>
</feature>
<feature type="binding site" evidence="1">
    <location>
        <position position="421"/>
    </location>
    <ligand>
        <name>Mg(2+)</name>
        <dbReference type="ChEBI" id="CHEBI:18420"/>
        <label>1</label>
    </ligand>
</feature>
<feature type="binding site" evidence="1">
    <location>
        <position position="421"/>
    </location>
    <ligand>
        <name>Mg(2+)</name>
        <dbReference type="ChEBI" id="CHEBI:18420"/>
        <label>2</label>
    </ligand>
</feature>